<reference key="1">
    <citation type="journal article" date="1996" name="Biochim. Biophys. Acta">
        <title>Structure and functional expression of a complementary DNA for porcine parathyroid hormone/parathyroid hormone-related peptide receptor.</title>
        <authorList>
            <person name="Black E.C."/>
            <person name="Smith D.P."/>
            <person name="Zhang X.Y."/>
            <person name="Frolik C.A."/>
            <person name="Harvey A."/>
            <person name="Chandrasekhar S."/>
            <person name="Hsiung H.M."/>
        </authorList>
    </citation>
    <scope>NUCLEOTIDE SEQUENCE [MRNA]</scope>
    <scope>FUNCTION</scope>
    <scope>SUBCELLULAR LOCATION</scope>
</reference>
<gene>
    <name type="primary">PTH1R</name>
    <name type="synonym">PTHR</name>
    <name type="synonym">PTHR1</name>
</gene>
<proteinExistence type="evidence at transcript level"/>
<sequence>MGAARIAPGLALLLCCPVLSSAYALVDADDVMTKEEQIFLLHRAQAQCEKRLKEVLQRPADIMESDKGWASAPTSGKPRKEKASGKLYPESGEDTGSRHQGRPCLPEWDHILCWPLGAPGEVVAMPCPDYIYDFNHKGHAYRRCDRNGSWELVPGHNRTWANYSECVKFLTNETREREVFDRLGMIYTVGYSVSLASLTVAVLILAYFRRLHCTRNYIHMHLFLSFMLRAVSIFVKDAVLYSGATLDEAERLTEEELRAIAQAPLPPVAATSYVGCRVAVTFFLYFLATNYYWILVEGLYLHSLIFMAFFSEKKYLWGFTVFGWGLPAIFVAVWVSVRATLANTGCWDLSSGNKKWIIQVPILASIVLNFILFINIVRVLATKLRETNAGRCDTRQQYRKLLKSTLVLMPLFGVHYIVFMATPYTEVSGTLWQVQMHYEMLFNSFQGFFVAIIYCFCNGEVQAEIKKSWSRWTLALDFKRKARSGSSSYSYGPMVSHTSVTNVGPRTGLGLPLSPRLLPAATTNGHPQLPCHTKPETPALQTTPPVVAAPKDDGFLNGSCSGLDEEASAPERPSVLLQEEWETVM</sequence>
<protein>
    <recommendedName>
        <fullName>Parathyroid hormone/parathyroid hormone-related peptide receptor</fullName>
    </recommendedName>
    <alternativeName>
        <fullName>PTH/PTHrP type I receptor</fullName>
        <shortName>PTH/PTHr receptor</shortName>
    </alternativeName>
    <alternativeName>
        <fullName>Parathyroid hormone 1 receptor</fullName>
        <shortName>PTH1 receptor</shortName>
    </alternativeName>
</protein>
<organism>
    <name type="scientific">Sus scrofa</name>
    <name type="common">Pig</name>
    <dbReference type="NCBI Taxonomy" id="9823"/>
    <lineage>
        <taxon>Eukaryota</taxon>
        <taxon>Metazoa</taxon>
        <taxon>Chordata</taxon>
        <taxon>Craniata</taxon>
        <taxon>Vertebrata</taxon>
        <taxon>Euteleostomi</taxon>
        <taxon>Mammalia</taxon>
        <taxon>Eutheria</taxon>
        <taxon>Laurasiatheria</taxon>
        <taxon>Artiodactyla</taxon>
        <taxon>Suina</taxon>
        <taxon>Suidae</taxon>
        <taxon>Sus</taxon>
    </lineage>
</organism>
<dbReference type="EMBL" id="U18315">
    <property type="protein sequence ID" value="AAC48619.1"/>
    <property type="molecule type" value="mRNA"/>
</dbReference>
<dbReference type="RefSeq" id="NP_999547.1">
    <property type="nucleotide sequence ID" value="NM_214382.1"/>
</dbReference>
<dbReference type="SMR" id="P50133"/>
<dbReference type="FunCoup" id="P50133">
    <property type="interactions" value="159"/>
</dbReference>
<dbReference type="STRING" id="9823.ENSSSCP00000072505"/>
<dbReference type="GlyCosmos" id="P50133">
    <property type="glycosylation" value="4 sites, No reported glycans"/>
</dbReference>
<dbReference type="GlyGen" id="P50133">
    <property type="glycosylation" value="5 sites"/>
</dbReference>
<dbReference type="PaxDb" id="9823-ENSSSCP00000012077"/>
<dbReference type="Ensembl" id="ENSSSCT00000012401.4">
    <property type="protein sequence ID" value="ENSSSCP00000012077.3"/>
    <property type="gene ID" value="ENSSSCG00000011326.5"/>
</dbReference>
<dbReference type="Ensembl" id="ENSSSCT00030045174.1">
    <property type="protein sequence ID" value="ENSSSCP00030020299.1"/>
    <property type="gene ID" value="ENSSSCG00030032571.1"/>
</dbReference>
<dbReference type="Ensembl" id="ENSSSCT00040043419.1">
    <property type="protein sequence ID" value="ENSSSCP00040018217.1"/>
    <property type="gene ID" value="ENSSSCG00040031272.1"/>
</dbReference>
<dbReference type="Ensembl" id="ENSSSCT00040043508.1">
    <property type="protein sequence ID" value="ENSSSCP00040018263.1"/>
    <property type="gene ID" value="ENSSSCG00040031272.1"/>
</dbReference>
<dbReference type="Ensembl" id="ENSSSCT00045027312.1">
    <property type="protein sequence ID" value="ENSSSCP00045018871.1"/>
    <property type="gene ID" value="ENSSSCG00045016016.1"/>
</dbReference>
<dbReference type="Ensembl" id="ENSSSCT00045027411.1">
    <property type="protein sequence ID" value="ENSSSCP00045018936.1"/>
    <property type="gene ID" value="ENSSSCG00045016016.1"/>
</dbReference>
<dbReference type="Ensembl" id="ENSSSCT00050075646.1">
    <property type="protein sequence ID" value="ENSSSCP00050032611.1"/>
    <property type="gene ID" value="ENSSSCG00050055449.1"/>
</dbReference>
<dbReference type="Ensembl" id="ENSSSCT00060013714.1">
    <property type="protein sequence ID" value="ENSSSCP00060005256.1"/>
    <property type="gene ID" value="ENSSSCG00060010537.1"/>
</dbReference>
<dbReference type="Ensembl" id="ENSSSCT00115007866">
    <property type="protein sequence ID" value="ENSSSCP00115007386"/>
    <property type="gene ID" value="ENSSSCG00115004562"/>
</dbReference>
<dbReference type="GeneID" id="397675"/>
<dbReference type="KEGG" id="ssc:397675"/>
<dbReference type="CTD" id="5745"/>
<dbReference type="VGNC" id="VGNC:91961">
    <property type="gene designation" value="PTH1R"/>
</dbReference>
<dbReference type="eggNOG" id="KOG4564">
    <property type="taxonomic scope" value="Eukaryota"/>
</dbReference>
<dbReference type="GeneTree" id="ENSGT00940000158574"/>
<dbReference type="HOGENOM" id="CLU_002753_4_3_1"/>
<dbReference type="InParanoid" id="P50133"/>
<dbReference type="OrthoDB" id="6160250at2759"/>
<dbReference type="TreeFam" id="TF315710"/>
<dbReference type="Reactome" id="R-SSC-373080">
    <property type="pathway name" value="Class B/2 (Secretin family receptors)"/>
</dbReference>
<dbReference type="Reactome" id="R-SSC-418555">
    <property type="pathway name" value="G alpha (s) signalling events"/>
</dbReference>
<dbReference type="Proteomes" id="UP000008227">
    <property type="component" value="Chromosome 13"/>
</dbReference>
<dbReference type="Proteomes" id="UP000314985">
    <property type="component" value="Unplaced"/>
</dbReference>
<dbReference type="Proteomes" id="UP000694570">
    <property type="component" value="Unplaced"/>
</dbReference>
<dbReference type="Proteomes" id="UP000694571">
    <property type="component" value="Unplaced"/>
</dbReference>
<dbReference type="Proteomes" id="UP000694720">
    <property type="component" value="Unplaced"/>
</dbReference>
<dbReference type="Proteomes" id="UP000694722">
    <property type="component" value="Unplaced"/>
</dbReference>
<dbReference type="Proteomes" id="UP000694723">
    <property type="component" value="Unplaced"/>
</dbReference>
<dbReference type="Proteomes" id="UP000694724">
    <property type="component" value="Unplaced"/>
</dbReference>
<dbReference type="Proteomes" id="UP000694725">
    <property type="component" value="Unplaced"/>
</dbReference>
<dbReference type="Proteomes" id="UP000694726">
    <property type="component" value="Unplaced"/>
</dbReference>
<dbReference type="Proteomes" id="UP000694727">
    <property type="component" value="Unplaced"/>
</dbReference>
<dbReference type="Proteomes" id="UP000694728">
    <property type="component" value="Unplaced"/>
</dbReference>
<dbReference type="GO" id="GO:0005886">
    <property type="term" value="C:plasma membrane"/>
    <property type="evidence" value="ECO:0000250"/>
    <property type="project" value="UniProtKB"/>
</dbReference>
<dbReference type="GO" id="GO:0004991">
    <property type="term" value="F:parathyroid hormone receptor activity"/>
    <property type="evidence" value="ECO:0000250"/>
    <property type="project" value="UniProtKB"/>
</dbReference>
<dbReference type="GO" id="GO:0017046">
    <property type="term" value="F:peptide hormone binding"/>
    <property type="evidence" value="ECO:0000250"/>
    <property type="project" value="UniProtKB"/>
</dbReference>
<dbReference type="GO" id="GO:0042803">
    <property type="term" value="F:protein homodimerization activity"/>
    <property type="evidence" value="ECO:0000250"/>
    <property type="project" value="UniProtKB"/>
</dbReference>
<dbReference type="GO" id="GO:0007189">
    <property type="term" value="P:adenylate cyclase-activating G protein-coupled receptor signaling pathway"/>
    <property type="evidence" value="ECO:0000250"/>
    <property type="project" value="UniProtKB"/>
</dbReference>
<dbReference type="GO" id="GO:0007188">
    <property type="term" value="P:adenylate cyclase-modulating G protein-coupled receptor signaling pathway"/>
    <property type="evidence" value="ECO:0000250"/>
    <property type="project" value="UniProtKB"/>
</dbReference>
<dbReference type="GO" id="GO:0007166">
    <property type="term" value="P:cell surface receptor signaling pathway"/>
    <property type="evidence" value="ECO:0007669"/>
    <property type="project" value="InterPro"/>
</dbReference>
<dbReference type="CDD" id="cd15984">
    <property type="entry name" value="7tmB1_PTH1R"/>
    <property type="match status" value="1"/>
</dbReference>
<dbReference type="FunFam" id="1.20.1070.10:FF:000070">
    <property type="entry name" value="Parathyroid hormone/parathyroid hormone-related peptide receptor"/>
    <property type="match status" value="1"/>
</dbReference>
<dbReference type="Gene3D" id="4.10.1240.10">
    <property type="entry name" value="GPCR, family 2, extracellular hormone receptor domain"/>
    <property type="match status" value="1"/>
</dbReference>
<dbReference type="Gene3D" id="1.20.1070.10">
    <property type="entry name" value="Rhodopsin 7-helix transmembrane proteins"/>
    <property type="match status" value="1"/>
</dbReference>
<dbReference type="InterPro" id="IPR050332">
    <property type="entry name" value="GPCR_2"/>
</dbReference>
<dbReference type="InterPro" id="IPR017981">
    <property type="entry name" value="GPCR_2-like_7TM"/>
</dbReference>
<dbReference type="InterPro" id="IPR036445">
    <property type="entry name" value="GPCR_2_extracell_dom_sf"/>
</dbReference>
<dbReference type="InterPro" id="IPR001879">
    <property type="entry name" value="GPCR_2_extracellular_dom"/>
</dbReference>
<dbReference type="InterPro" id="IPR002170">
    <property type="entry name" value="GPCR_2_parathyroid_rcpt"/>
</dbReference>
<dbReference type="InterPro" id="IPR000832">
    <property type="entry name" value="GPCR_2_secretin-like"/>
</dbReference>
<dbReference type="InterPro" id="IPR017983">
    <property type="entry name" value="GPCR_2_secretin-like_CS"/>
</dbReference>
<dbReference type="PANTHER" id="PTHR45620:SF27">
    <property type="entry name" value="PARATHYROID HORMONE_PARATHYROID HORMONE-RELATED PEPTIDE RECEPTOR"/>
    <property type="match status" value="1"/>
</dbReference>
<dbReference type="PANTHER" id="PTHR45620">
    <property type="entry name" value="PDF RECEPTOR-LIKE PROTEIN-RELATED"/>
    <property type="match status" value="1"/>
</dbReference>
<dbReference type="Pfam" id="PF00002">
    <property type="entry name" value="7tm_2"/>
    <property type="match status" value="1"/>
</dbReference>
<dbReference type="Pfam" id="PF02793">
    <property type="entry name" value="HRM"/>
    <property type="match status" value="1"/>
</dbReference>
<dbReference type="PRINTS" id="PR00249">
    <property type="entry name" value="GPCRSECRETIN"/>
</dbReference>
<dbReference type="PRINTS" id="PR00393">
    <property type="entry name" value="PTRHORMONER"/>
</dbReference>
<dbReference type="SMART" id="SM00008">
    <property type="entry name" value="HormR"/>
    <property type="match status" value="1"/>
</dbReference>
<dbReference type="SUPFAM" id="SSF81321">
    <property type="entry name" value="Family A G protein-coupled receptor-like"/>
    <property type="match status" value="1"/>
</dbReference>
<dbReference type="SUPFAM" id="SSF111418">
    <property type="entry name" value="Hormone receptor domain"/>
    <property type="match status" value="1"/>
</dbReference>
<dbReference type="PROSITE" id="PS00649">
    <property type="entry name" value="G_PROTEIN_RECEP_F2_1"/>
    <property type="match status" value="1"/>
</dbReference>
<dbReference type="PROSITE" id="PS00650">
    <property type="entry name" value="G_PROTEIN_RECEP_F2_2"/>
    <property type="match status" value="1"/>
</dbReference>
<dbReference type="PROSITE" id="PS50227">
    <property type="entry name" value="G_PROTEIN_RECEP_F2_3"/>
    <property type="match status" value="1"/>
</dbReference>
<dbReference type="PROSITE" id="PS50261">
    <property type="entry name" value="G_PROTEIN_RECEP_F2_4"/>
    <property type="match status" value="1"/>
</dbReference>
<comment type="function">
    <text evidence="2 5">G-protein-coupled receptor for parathyroid hormone (PTH) and for parathyroid hormone-related peptide (PTHLH) (PubMed:8688470). Ligand binding causes a conformation change that triggers signaling via guanine nucleotide-binding proteins (G proteins) and modulates the activity of downstream effectors, such as adenylate cyclase (cAMP) (By similarity). PTH1R is coupled to G(s) G alpha proteins and mediates activation of adenylate cyclase activity (By similarity). PTHLH dissociates from PTH1R more rapidly than PTH; as consequence, the cAMP response induced by PTHLH decays faster than the response induced by PTH (By similarity).</text>
</comment>
<comment type="subunit">
    <text evidence="2">Homodimer in the absence of bound ligand. Peptide hormone binding leads to dissociation of the homodimer.</text>
</comment>
<comment type="subcellular location">
    <subcellularLocation>
        <location evidence="5">Cell membrane</location>
        <topology evidence="6">Multi-pass membrane protein</topology>
    </subcellularLocation>
</comment>
<comment type="PTM">
    <text evidence="2">N-glycosylated.</text>
</comment>
<comment type="similarity">
    <text evidence="6">Belongs to the G-protein coupled receptor 2 family.</text>
</comment>
<keyword id="KW-1003">Cell membrane</keyword>
<keyword id="KW-1015">Disulfide bond</keyword>
<keyword id="KW-0297">G-protein coupled receptor</keyword>
<keyword id="KW-0325">Glycoprotein</keyword>
<keyword id="KW-0472">Membrane</keyword>
<keyword id="KW-0597">Phosphoprotein</keyword>
<keyword id="KW-0675">Receptor</keyword>
<keyword id="KW-1185">Reference proteome</keyword>
<keyword id="KW-0732">Signal</keyword>
<keyword id="KW-0807">Transducer</keyword>
<keyword id="KW-0812">Transmembrane</keyword>
<keyword id="KW-1133">Transmembrane helix</keyword>
<name>PTH1R_PIG</name>
<feature type="signal peptide" evidence="3">
    <location>
        <begin position="1"/>
        <end position="26"/>
    </location>
</feature>
<feature type="chain" id="PRO_0000012847" description="Parathyroid hormone/parathyroid hormone-related peptide receptor">
    <location>
        <begin position="27"/>
        <end position="585"/>
    </location>
</feature>
<feature type="topological domain" description="Extracellular" evidence="3">
    <location>
        <begin position="27"/>
        <end position="184"/>
    </location>
</feature>
<feature type="transmembrane region" description="Helical; Name=1" evidence="3">
    <location>
        <begin position="185"/>
        <end position="208"/>
    </location>
</feature>
<feature type="topological domain" description="Cytoplasmic" evidence="3">
    <location>
        <begin position="209"/>
        <end position="215"/>
    </location>
</feature>
<feature type="transmembrane region" description="Helical; Name=2" evidence="3">
    <location>
        <begin position="216"/>
        <end position="235"/>
    </location>
</feature>
<feature type="topological domain" description="Extracellular" evidence="3">
    <location>
        <begin position="236"/>
        <end position="277"/>
    </location>
</feature>
<feature type="transmembrane region" description="Helical; Name=3" evidence="3">
    <location>
        <begin position="278"/>
        <end position="301"/>
    </location>
</feature>
<feature type="topological domain" description="Cytoplasmic" evidence="3">
    <location>
        <begin position="302"/>
        <end position="315"/>
    </location>
</feature>
<feature type="transmembrane region" description="Helical; Name=4" evidence="3">
    <location>
        <begin position="316"/>
        <end position="337"/>
    </location>
</feature>
<feature type="topological domain" description="Extracellular" evidence="3">
    <location>
        <begin position="338"/>
        <end position="356"/>
    </location>
</feature>
<feature type="transmembrane region" description="Helical; Name=5" evidence="3">
    <location>
        <begin position="357"/>
        <end position="377"/>
    </location>
</feature>
<feature type="topological domain" description="Cytoplasmic" evidence="3">
    <location>
        <begin position="378"/>
        <end position="404"/>
    </location>
</feature>
<feature type="transmembrane region" description="Helical; Name=6" evidence="3">
    <location>
        <begin position="405"/>
        <end position="423"/>
    </location>
</feature>
<feature type="topological domain" description="Extracellular" evidence="3">
    <location>
        <begin position="424"/>
        <end position="435"/>
    </location>
</feature>
<feature type="transmembrane region" description="Helical; Name=7" evidence="3">
    <location>
        <begin position="436"/>
        <end position="458"/>
    </location>
</feature>
<feature type="topological domain" description="Cytoplasmic" evidence="3">
    <location>
        <begin position="459"/>
        <end position="585"/>
    </location>
</feature>
<feature type="region of interest" description="Disordered" evidence="4">
    <location>
        <begin position="66"/>
        <end position="100"/>
    </location>
</feature>
<feature type="short sequence motif" description="Important for interaction with G proteins" evidence="1">
    <location>
        <begin position="469"/>
        <end position="472"/>
    </location>
</feature>
<feature type="modified residue" description="Phosphothreonine" evidence="2">
    <location>
        <position position="543"/>
    </location>
</feature>
<feature type="glycosylation site" description="N-linked (GlcNAc...) asparagine" evidence="3">
    <location>
        <position position="147"/>
    </location>
</feature>
<feature type="glycosylation site" description="N-linked (GlcNAc...) asparagine" evidence="3">
    <location>
        <position position="157"/>
    </location>
</feature>
<feature type="glycosylation site" description="N-linked (GlcNAc...) asparagine" evidence="3">
    <location>
        <position position="162"/>
    </location>
</feature>
<feature type="glycosylation site" description="N-linked (GlcNAc...) asparagine" evidence="3">
    <location>
        <position position="172"/>
    </location>
</feature>
<feature type="disulfide bond" evidence="2">
    <location>
        <begin position="48"/>
        <end position="113"/>
    </location>
</feature>
<feature type="disulfide bond" evidence="2">
    <location>
        <begin position="104"/>
        <end position="144"/>
    </location>
</feature>
<feature type="disulfide bond" evidence="2">
    <location>
        <begin position="127"/>
        <end position="166"/>
    </location>
</feature>
<evidence type="ECO:0000250" key="1"/>
<evidence type="ECO:0000250" key="2">
    <source>
        <dbReference type="UniProtKB" id="Q03431"/>
    </source>
</evidence>
<evidence type="ECO:0000255" key="3"/>
<evidence type="ECO:0000256" key="4">
    <source>
        <dbReference type="SAM" id="MobiDB-lite"/>
    </source>
</evidence>
<evidence type="ECO:0000269" key="5">
    <source>
    </source>
</evidence>
<evidence type="ECO:0000305" key="6"/>
<accession>P50133</accession>